<organism>
    <name type="scientific">Shewanella sp. (strain MR-7)</name>
    <dbReference type="NCBI Taxonomy" id="60481"/>
    <lineage>
        <taxon>Bacteria</taxon>
        <taxon>Pseudomonadati</taxon>
        <taxon>Pseudomonadota</taxon>
        <taxon>Gammaproteobacteria</taxon>
        <taxon>Alteromonadales</taxon>
        <taxon>Shewanellaceae</taxon>
        <taxon>Shewanella</taxon>
    </lineage>
</organism>
<evidence type="ECO:0000255" key="1">
    <source>
        <dbReference type="HAMAP-Rule" id="MF_00168"/>
    </source>
</evidence>
<accession>Q0HWQ9</accession>
<protein>
    <recommendedName>
        <fullName evidence="1">Queuine tRNA-ribosyltransferase</fullName>
        <ecNumber evidence="1">2.4.2.29</ecNumber>
    </recommendedName>
    <alternativeName>
        <fullName evidence="1">Guanine insertion enzyme</fullName>
    </alternativeName>
    <alternativeName>
        <fullName evidence="1">tRNA-guanine transglycosylase</fullName>
    </alternativeName>
</protein>
<dbReference type="EC" id="2.4.2.29" evidence="1"/>
<dbReference type="EMBL" id="CP000444">
    <property type="protein sequence ID" value="ABI42446.1"/>
    <property type="molecule type" value="Genomic_DNA"/>
</dbReference>
<dbReference type="SMR" id="Q0HWQ9"/>
<dbReference type="KEGG" id="shm:Shewmr7_1447"/>
<dbReference type="HOGENOM" id="CLU_022060_0_1_6"/>
<dbReference type="UniPathway" id="UPA00392"/>
<dbReference type="GO" id="GO:0005829">
    <property type="term" value="C:cytosol"/>
    <property type="evidence" value="ECO:0007669"/>
    <property type="project" value="TreeGrafter"/>
</dbReference>
<dbReference type="GO" id="GO:0046872">
    <property type="term" value="F:metal ion binding"/>
    <property type="evidence" value="ECO:0007669"/>
    <property type="project" value="UniProtKB-KW"/>
</dbReference>
<dbReference type="GO" id="GO:0008479">
    <property type="term" value="F:tRNA-guanosine(34) queuine transglycosylase activity"/>
    <property type="evidence" value="ECO:0007669"/>
    <property type="project" value="UniProtKB-UniRule"/>
</dbReference>
<dbReference type="GO" id="GO:0008616">
    <property type="term" value="P:queuosine biosynthetic process"/>
    <property type="evidence" value="ECO:0007669"/>
    <property type="project" value="UniProtKB-UniRule"/>
</dbReference>
<dbReference type="GO" id="GO:0002099">
    <property type="term" value="P:tRNA wobble guanine modification"/>
    <property type="evidence" value="ECO:0007669"/>
    <property type="project" value="TreeGrafter"/>
</dbReference>
<dbReference type="GO" id="GO:0101030">
    <property type="term" value="P:tRNA-guanine transglycosylation"/>
    <property type="evidence" value="ECO:0007669"/>
    <property type="project" value="InterPro"/>
</dbReference>
<dbReference type="FunFam" id="3.20.20.105:FF:000001">
    <property type="entry name" value="Queuine tRNA-ribosyltransferase"/>
    <property type="match status" value="1"/>
</dbReference>
<dbReference type="Gene3D" id="3.20.20.105">
    <property type="entry name" value="Queuine tRNA-ribosyltransferase-like"/>
    <property type="match status" value="1"/>
</dbReference>
<dbReference type="HAMAP" id="MF_00168">
    <property type="entry name" value="Q_tRNA_Tgt"/>
    <property type="match status" value="1"/>
</dbReference>
<dbReference type="InterPro" id="IPR050076">
    <property type="entry name" value="ArchSynthase1/Queuine_TRR"/>
</dbReference>
<dbReference type="InterPro" id="IPR004803">
    <property type="entry name" value="TGT"/>
</dbReference>
<dbReference type="InterPro" id="IPR036511">
    <property type="entry name" value="TGT-like_sf"/>
</dbReference>
<dbReference type="InterPro" id="IPR002616">
    <property type="entry name" value="tRNA_ribo_trans-like"/>
</dbReference>
<dbReference type="NCBIfam" id="TIGR00430">
    <property type="entry name" value="Q_tRNA_tgt"/>
    <property type="match status" value="1"/>
</dbReference>
<dbReference type="NCBIfam" id="TIGR00449">
    <property type="entry name" value="tgt_general"/>
    <property type="match status" value="1"/>
</dbReference>
<dbReference type="PANTHER" id="PTHR46499">
    <property type="entry name" value="QUEUINE TRNA-RIBOSYLTRANSFERASE"/>
    <property type="match status" value="1"/>
</dbReference>
<dbReference type="PANTHER" id="PTHR46499:SF1">
    <property type="entry name" value="QUEUINE TRNA-RIBOSYLTRANSFERASE"/>
    <property type="match status" value="1"/>
</dbReference>
<dbReference type="Pfam" id="PF01702">
    <property type="entry name" value="TGT"/>
    <property type="match status" value="1"/>
</dbReference>
<dbReference type="SUPFAM" id="SSF51713">
    <property type="entry name" value="tRNA-guanine transglycosylase"/>
    <property type="match status" value="1"/>
</dbReference>
<comment type="function">
    <text evidence="1">Catalyzes the base-exchange of a guanine (G) residue with the queuine precursor 7-aminomethyl-7-deazaguanine (PreQ1) at position 34 (anticodon wobble position) in tRNAs with GU(N) anticodons (tRNA-Asp, -Asn, -His and -Tyr). Catalysis occurs through a double-displacement mechanism. The nucleophile active site attacks the C1' of nucleotide 34 to detach the guanine base from the RNA, forming a covalent enzyme-RNA intermediate. The proton acceptor active site deprotonates the incoming PreQ1, allowing a nucleophilic attack on the C1' of the ribose to form the product. After dissociation, two additional enzymatic reactions on the tRNA convert PreQ1 to queuine (Q), resulting in the hypermodified nucleoside queuosine (7-(((4,5-cis-dihydroxy-2-cyclopenten-1-yl)amino)methyl)-7-deazaguanosine).</text>
</comment>
<comment type="catalytic activity">
    <reaction evidence="1">
        <text>7-aminomethyl-7-carbaguanine + guanosine(34) in tRNA = 7-aminomethyl-7-carbaguanosine(34) in tRNA + guanine</text>
        <dbReference type="Rhea" id="RHEA:24104"/>
        <dbReference type="Rhea" id="RHEA-COMP:10341"/>
        <dbReference type="Rhea" id="RHEA-COMP:10342"/>
        <dbReference type="ChEBI" id="CHEBI:16235"/>
        <dbReference type="ChEBI" id="CHEBI:58703"/>
        <dbReference type="ChEBI" id="CHEBI:74269"/>
        <dbReference type="ChEBI" id="CHEBI:82833"/>
        <dbReference type="EC" id="2.4.2.29"/>
    </reaction>
</comment>
<comment type="cofactor">
    <cofactor evidence="1">
        <name>Zn(2+)</name>
        <dbReference type="ChEBI" id="CHEBI:29105"/>
    </cofactor>
    <text evidence="1">Binds 1 zinc ion per subunit.</text>
</comment>
<comment type="pathway">
    <text evidence="1">tRNA modification; tRNA-queuosine biosynthesis.</text>
</comment>
<comment type="subunit">
    <text evidence="1">Homodimer. Within each dimer, one monomer is responsible for RNA recognition and catalysis, while the other monomer binds to the replacement base PreQ1.</text>
</comment>
<comment type="similarity">
    <text evidence="1">Belongs to the queuine tRNA-ribosyltransferase family.</text>
</comment>
<feature type="chain" id="PRO_1000016852" description="Queuine tRNA-ribosyltransferase">
    <location>
        <begin position="1"/>
        <end position="374"/>
    </location>
</feature>
<feature type="region of interest" description="RNA binding" evidence="1">
    <location>
        <begin position="245"/>
        <end position="251"/>
    </location>
</feature>
<feature type="region of interest" description="RNA binding; important for wobble base 34 recognition" evidence="1">
    <location>
        <begin position="269"/>
        <end position="273"/>
    </location>
</feature>
<feature type="active site" description="Proton acceptor" evidence="1">
    <location>
        <position position="89"/>
    </location>
</feature>
<feature type="active site" description="Nucleophile" evidence="1">
    <location>
        <position position="264"/>
    </location>
</feature>
<feature type="binding site" evidence="1">
    <location>
        <begin position="89"/>
        <end position="93"/>
    </location>
    <ligand>
        <name>substrate</name>
    </ligand>
</feature>
<feature type="binding site" evidence="1">
    <location>
        <position position="143"/>
    </location>
    <ligand>
        <name>substrate</name>
    </ligand>
</feature>
<feature type="binding site" evidence="1">
    <location>
        <position position="187"/>
    </location>
    <ligand>
        <name>substrate</name>
    </ligand>
</feature>
<feature type="binding site" evidence="1">
    <location>
        <position position="214"/>
    </location>
    <ligand>
        <name>substrate</name>
    </ligand>
</feature>
<feature type="binding site" evidence="1">
    <location>
        <position position="302"/>
    </location>
    <ligand>
        <name>Zn(2+)</name>
        <dbReference type="ChEBI" id="CHEBI:29105"/>
    </ligand>
</feature>
<feature type="binding site" evidence="1">
    <location>
        <position position="304"/>
    </location>
    <ligand>
        <name>Zn(2+)</name>
        <dbReference type="ChEBI" id="CHEBI:29105"/>
    </ligand>
</feature>
<feature type="binding site" evidence="1">
    <location>
        <position position="307"/>
    </location>
    <ligand>
        <name>Zn(2+)</name>
        <dbReference type="ChEBI" id="CHEBI:29105"/>
    </ligand>
</feature>
<feature type="binding site" evidence="1">
    <location>
        <position position="333"/>
    </location>
    <ligand>
        <name>Zn(2+)</name>
        <dbReference type="ChEBI" id="CHEBI:29105"/>
    </ligand>
</feature>
<proteinExistence type="inferred from homology"/>
<keyword id="KW-0328">Glycosyltransferase</keyword>
<keyword id="KW-0479">Metal-binding</keyword>
<keyword id="KW-0671">Queuosine biosynthesis</keyword>
<keyword id="KW-0808">Transferase</keyword>
<keyword id="KW-0819">tRNA processing</keyword>
<keyword id="KW-0862">Zinc</keyword>
<sequence length="374" mass="42576">MKFELDTTDGRARRGRLIFERGTVETPAFMPVGTYGTVKGMTPEEVRATGADILLGNTFHLWLRPGEEIMRKHGDLHDFMNWQRPILTDSGGFQVFSLGDIRKITEEGVHFRSPINGEKIFLDPEKSMQIQHALGSDVVMIFDECTPYPATEDEARKSMQMSLRWAKRSRDEFDRLENPNSLFGIIQGSVYEDLRDESLKGLVEIGFDGYAVGGLAVGEPKEDMHRILEHVCPQIPADKPRYLMGVGKPEDLVEGVRRGIDMFDCVMPTRNARNGHLFTSEGVIKIRNARHRDDTSPLDPKCDCYTCKNYSRAYLYHLDRCNEILGARLNTIHNLRYYQMLMEGLRGAIETGTLDAFVKDFYTSQGREVPELVD</sequence>
<gene>
    <name evidence="1" type="primary">tgt</name>
    <name type="ordered locus">Shewmr7_1447</name>
</gene>
<reference key="1">
    <citation type="submission" date="2006-08" db="EMBL/GenBank/DDBJ databases">
        <title>Complete sequence of chromosome 1 of Shewanella sp. MR-7.</title>
        <authorList>
            <person name="Copeland A."/>
            <person name="Lucas S."/>
            <person name="Lapidus A."/>
            <person name="Barry K."/>
            <person name="Detter J.C."/>
            <person name="Glavina del Rio T."/>
            <person name="Hammon N."/>
            <person name="Israni S."/>
            <person name="Dalin E."/>
            <person name="Tice H."/>
            <person name="Pitluck S."/>
            <person name="Kiss H."/>
            <person name="Brettin T."/>
            <person name="Bruce D."/>
            <person name="Han C."/>
            <person name="Tapia R."/>
            <person name="Gilna P."/>
            <person name="Schmutz J."/>
            <person name="Larimer F."/>
            <person name="Land M."/>
            <person name="Hauser L."/>
            <person name="Kyrpides N."/>
            <person name="Mikhailova N."/>
            <person name="Nealson K."/>
            <person name="Konstantinidis K."/>
            <person name="Klappenbach J."/>
            <person name="Tiedje J."/>
            <person name="Richardson P."/>
        </authorList>
    </citation>
    <scope>NUCLEOTIDE SEQUENCE [LARGE SCALE GENOMIC DNA]</scope>
    <source>
        <strain>MR-7</strain>
    </source>
</reference>
<name>TGT_SHESR</name>